<name>ASTB_SALAR</name>
<proteinExistence type="inferred from homology"/>
<accession>A9MFF9</accession>
<sequence length="447" mass="49316">MTAHEVNFDGLVGLTHHYAGLSFGNEASTRHRFQVSNPLLAVKQGLLKMKALADAGFPQAVIPPHERPFIPALRQLGFSGNDEQILDKVARQAPRWLSRVSSASPMWVANAATVCPSADALDGKVHLTVANLNNKFHRSLEAPVTEALLRTIFRDESRFSLHSALPQVALLGDEGAANHNRLGGEYGLAGVQLFVYGREEGNEKRPARYPARQTREASEAVARLNQVNPQQVIFAQQNPEAIDQGVFHNDVIAVSNRQVLFCHEAAFARQERLINHLRTRVDGFMAIEVPADEVSVSDAVATYLFNSQLLSRDDGSMLLVLPQECQDHVGVWRYLNKLVAEDNPISAMQVFDLRESMANGGGPACLRLRVVLTEEEQRAVNPAVMMNDALFTALNAWAERFYRDRLTAADLADPLLLREGREALDVLTRLLDLGSVYPFQQTGAADG</sequence>
<reference key="1">
    <citation type="submission" date="2007-11" db="EMBL/GenBank/DDBJ databases">
        <authorList>
            <consortium name="The Salmonella enterica serovar Arizonae Genome Sequencing Project"/>
            <person name="McClelland M."/>
            <person name="Sanderson E.K."/>
            <person name="Porwollik S."/>
            <person name="Spieth J."/>
            <person name="Clifton W.S."/>
            <person name="Fulton R."/>
            <person name="Chunyan W."/>
            <person name="Wollam A."/>
            <person name="Shah N."/>
            <person name="Pepin K."/>
            <person name="Bhonagiri V."/>
            <person name="Nash W."/>
            <person name="Johnson M."/>
            <person name="Thiruvilangam P."/>
            <person name="Wilson R."/>
        </authorList>
    </citation>
    <scope>NUCLEOTIDE SEQUENCE [LARGE SCALE GENOMIC DNA]</scope>
    <source>
        <strain>ATCC BAA-731 / CDC346-86 / RSK2980</strain>
    </source>
</reference>
<evidence type="ECO:0000255" key="1">
    <source>
        <dbReference type="HAMAP-Rule" id="MF_01172"/>
    </source>
</evidence>
<dbReference type="EC" id="3.5.3.23" evidence="1"/>
<dbReference type="EMBL" id="CP000880">
    <property type="protein sequence ID" value="ABX21564.1"/>
    <property type="molecule type" value="Genomic_DNA"/>
</dbReference>
<dbReference type="SMR" id="A9MFF9"/>
<dbReference type="STRING" id="41514.SARI_01673"/>
<dbReference type="KEGG" id="ses:SARI_01673"/>
<dbReference type="HOGENOM" id="CLU_053835_0_0_6"/>
<dbReference type="UniPathway" id="UPA00185">
    <property type="reaction ID" value="UER00280"/>
</dbReference>
<dbReference type="Proteomes" id="UP000002084">
    <property type="component" value="Chromosome"/>
</dbReference>
<dbReference type="GO" id="GO:0009015">
    <property type="term" value="F:N-succinylarginine dihydrolase activity"/>
    <property type="evidence" value="ECO:0007669"/>
    <property type="project" value="UniProtKB-UniRule"/>
</dbReference>
<dbReference type="GO" id="GO:0019544">
    <property type="term" value="P:arginine catabolic process to glutamate"/>
    <property type="evidence" value="ECO:0007669"/>
    <property type="project" value="UniProtKB-UniRule"/>
</dbReference>
<dbReference type="GO" id="GO:0019545">
    <property type="term" value="P:arginine catabolic process to succinate"/>
    <property type="evidence" value="ECO:0007669"/>
    <property type="project" value="UniProtKB-UniRule"/>
</dbReference>
<dbReference type="FunFam" id="3.75.10.20:FF:000001">
    <property type="entry name" value="N-succinylarginine dihydrolase"/>
    <property type="match status" value="1"/>
</dbReference>
<dbReference type="Gene3D" id="3.75.10.20">
    <property type="entry name" value="Succinylarginine dihydrolase"/>
    <property type="match status" value="1"/>
</dbReference>
<dbReference type="HAMAP" id="MF_01172">
    <property type="entry name" value="AstB"/>
    <property type="match status" value="1"/>
</dbReference>
<dbReference type="InterPro" id="IPR037031">
    <property type="entry name" value="AstB_sf"/>
</dbReference>
<dbReference type="InterPro" id="IPR007079">
    <property type="entry name" value="SuccinylArg_d-Hdrlase_AstB"/>
</dbReference>
<dbReference type="NCBIfam" id="TIGR03241">
    <property type="entry name" value="arg_catab_astB"/>
    <property type="match status" value="1"/>
</dbReference>
<dbReference type="NCBIfam" id="NF009789">
    <property type="entry name" value="PRK13281.1"/>
    <property type="match status" value="1"/>
</dbReference>
<dbReference type="PANTHER" id="PTHR30420">
    <property type="entry name" value="N-SUCCINYLARGININE DIHYDROLASE"/>
    <property type="match status" value="1"/>
</dbReference>
<dbReference type="PANTHER" id="PTHR30420:SF2">
    <property type="entry name" value="N-SUCCINYLARGININE DIHYDROLASE"/>
    <property type="match status" value="1"/>
</dbReference>
<dbReference type="Pfam" id="PF04996">
    <property type="entry name" value="AstB"/>
    <property type="match status" value="1"/>
</dbReference>
<dbReference type="SUPFAM" id="SSF55909">
    <property type="entry name" value="Pentein"/>
    <property type="match status" value="1"/>
</dbReference>
<gene>
    <name evidence="1" type="primary">astB</name>
    <name type="ordered locus">SARI_01673</name>
</gene>
<comment type="function">
    <text evidence="1">Catalyzes the hydrolysis of N(2)-succinylarginine into N(2)-succinylornithine, ammonia and CO(2).</text>
</comment>
<comment type="catalytic activity">
    <reaction evidence="1">
        <text>N(2)-succinyl-L-arginine + 2 H2O + 2 H(+) = N(2)-succinyl-L-ornithine + 2 NH4(+) + CO2</text>
        <dbReference type="Rhea" id="RHEA:19533"/>
        <dbReference type="ChEBI" id="CHEBI:15377"/>
        <dbReference type="ChEBI" id="CHEBI:15378"/>
        <dbReference type="ChEBI" id="CHEBI:16526"/>
        <dbReference type="ChEBI" id="CHEBI:28938"/>
        <dbReference type="ChEBI" id="CHEBI:58241"/>
        <dbReference type="ChEBI" id="CHEBI:58514"/>
        <dbReference type="EC" id="3.5.3.23"/>
    </reaction>
</comment>
<comment type="pathway">
    <text evidence="1">Amino-acid degradation; L-arginine degradation via AST pathway; L-glutamate and succinate from L-arginine: step 2/5.</text>
</comment>
<comment type="subunit">
    <text evidence="1">Homodimer.</text>
</comment>
<comment type="similarity">
    <text evidence="1">Belongs to the succinylarginine dihydrolase family.</text>
</comment>
<feature type="chain" id="PRO_1000085395" description="N-succinylarginine dihydrolase">
    <location>
        <begin position="1"/>
        <end position="447"/>
    </location>
</feature>
<feature type="active site" evidence="1">
    <location>
        <position position="174"/>
    </location>
</feature>
<feature type="active site" evidence="1">
    <location>
        <position position="248"/>
    </location>
</feature>
<feature type="active site" description="Nucleophile" evidence="1">
    <location>
        <position position="365"/>
    </location>
</feature>
<feature type="binding site" evidence="1">
    <location>
        <begin position="19"/>
        <end position="28"/>
    </location>
    <ligand>
        <name>substrate</name>
    </ligand>
</feature>
<feature type="binding site" evidence="1">
    <location>
        <position position="110"/>
    </location>
    <ligand>
        <name>substrate</name>
    </ligand>
</feature>
<feature type="binding site" evidence="1">
    <location>
        <begin position="137"/>
        <end position="138"/>
    </location>
    <ligand>
        <name>substrate</name>
    </ligand>
</feature>
<feature type="binding site" evidence="1">
    <location>
        <position position="212"/>
    </location>
    <ligand>
        <name>substrate</name>
    </ligand>
</feature>
<feature type="binding site" evidence="1">
    <location>
        <position position="250"/>
    </location>
    <ligand>
        <name>substrate</name>
    </ligand>
</feature>
<feature type="binding site" evidence="1">
    <location>
        <position position="359"/>
    </location>
    <ligand>
        <name>substrate</name>
    </ligand>
</feature>
<organism>
    <name type="scientific">Salmonella arizonae (strain ATCC BAA-731 / CDC346-86 / RSK2980)</name>
    <dbReference type="NCBI Taxonomy" id="41514"/>
    <lineage>
        <taxon>Bacteria</taxon>
        <taxon>Pseudomonadati</taxon>
        <taxon>Pseudomonadota</taxon>
        <taxon>Gammaproteobacteria</taxon>
        <taxon>Enterobacterales</taxon>
        <taxon>Enterobacteriaceae</taxon>
        <taxon>Salmonella</taxon>
    </lineage>
</organism>
<protein>
    <recommendedName>
        <fullName evidence="1">N-succinylarginine dihydrolase</fullName>
        <ecNumber evidence="1">3.5.3.23</ecNumber>
    </recommendedName>
</protein>
<keyword id="KW-0056">Arginine metabolism</keyword>
<keyword id="KW-0378">Hydrolase</keyword>
<keyword id="KW-1185">Reference proteome</keyword>